<protein>
    <recommendedName>
        <fullName evidence="1">DNA-directed RNA polymerase subunit beta'</fullName>
        <shortName evidence="1">RNAP subunit beta'</shortName>
        <ecNumber evidence="1">2.7.7.6</ecNumber>
    </recommendedName>
    <alternativeName>
        <fullName evidence="1">RNA polymerase subunit beta'</fullName>
    </alternativeName>
    <alternativeName>
        <fullName evidence="1">Transcriptase subunit beta'</fullName>
    </alternativeName>
</protein>
<feature type="chain" id="PRO_0000308873" description="DNA-directed RNA polymerase subunit beta'">
    <location>
        <begin position="1"/>
        <end position="1409"/>
    </location>
</feature>
<feature type="region of interest" description="Disordered" evidence="2">
    <location>
        <begin position="1389"/>
        <end position="1409"/>
    </location>
</feature>
<feature type="binding site" evidence="1">
    <location>
        <position position="70"/>
    </location>
    <ligand>
        <name>Zn(2+)</name>
        <dbReference type="ChEBI" id="CHEBI:29105"/>
        <label>1</label>
    </ligand>
</feature>
<feature type="binding site" evidence="1">
    <location>
        <position position="72"/>
    </location>
    <ligand>
        <name>Zn(2+)</name>
        <dbReference type="ChEBI" id="CHEBI:29105"/>
        <label>1</label>
    </ligand>
</feature>
<feature type="binding site" evidence="1">
    <location>
        <position position="85"/>
    </location>
    <ligand>
        <name>Zn(2+)</name>
        <dbReference type="ChEBI" id="CHEBI:29105"/>
        <label>1</label>
    </ligand>
</feature>
<feature type="binding site" evidence="1">
    <location>
        <position position="88"/>
    </location>
    <ligand>
        <name>Zn(2+)</name>
        <dbReference type="ChEBI" id="CHEBI:29105"/>
        <label>1</label>
    </ligand>
</feature>
<feature type="binding site" evidence="1">
    <location>
        <position position="461"/>
    </location>
    <ligand>
        <name>Mg(2+)</name>
        <dbReference type="ChEBI" id="CHEBI:18420"/>
    </ligand>
</feature>
<feature type="binding site" evidence="1">
    <location>
        <position position="463"/>
    </location>
    <ligand>
        <name>Mg(2+)</name>
        <dbReference type="ChEBI" id="CHEBI:18420"/>
    </ligand>
</feature>
<feature type="binding site" evidence="1">
    <location>
        <position position="465"/>
    </location>
    <ligand>
        <name>Mg(2+)</name>
        <dbReference type="ChEBI" id="CHEBI:18420"/>
    </ligand>
</feature>
<feature type="binding site" evidence="1">
    <location>
        <position position="833"/>
    </location>
    <ligand>
        <name>Zn(2+)</name>
        <dbReference type="ChEBI" id="CHEBI:29105"/>
        <label>2</label>
    </ligand>
</feature>
<feature type="binding site" evidence="1">
    <location>
        <position position="907"/>
    </location>
    <ligand>
        <name>Zn(2+)</name>
        <dbReference type="ChEBI" id="CHEBI:29105"/>
        <label>2</label>
    </ligand>
</feature>
<feature type="binding site" evidence="1">
    <location>
        <position position="914"/>
    </location>
    <ligand>
        <name>Zn(2+)</name>
        <dbReference type="ChEBI" id="CHEBI:29105"/>
        <label>2</label>
    </ligand>
</feature>
<feature type="binding site" evidence="1">
    <location>
        <position position="917"/>
    </location>
    <ligand>
        <name>Zn(2+)</name>
        <dbReference type="ChEBI" id="CHEBI:29105"/>
        <label>2</label>
    </ligand>
</feature>
<reference key="1">
    <citation type="submission" date="2006-10" db="EMBL/GenBank/DDBJ databases">
        <title>Complete sequence of chromosome of Pelobacter propionicus DSM 2379.</title>
        <authorList>
            <consortium name="US DOE Joint Genome Institute"/>
            <person name="Copeland A."/>
            <person name="Lucas S."/>
            <person name="Lapidus A."/>
            <person name="Barry K."/>
            <person name="Detter J.C."/>
            <person name="Glavina del Rio T."/>
            <person name="Hammon N."/>
            <person name="Israni S."/>
            <person name="Dalin E."/>
            <person name="Tice H."/>
            <person name="Pitluck S."/>
            <person name="Saunders E."/>
            <person name="Brettin T."/>
            <person name="Bruce D."/>
            <person name="Han C."/>
            <person name="Tapia R."/>
            <person name="Schmutz J."/>
            <person name="Larimer F."/>
            <person name="Land M."/>
            <person name="Hauser L."/>
            <person name="Kyrpides N."/>
            <person name="Kim E."/>
            <person name="Lovley D."/>
            <person name="Richardson P."/>
        </authorList>
    </citation>
    <scope>NUCLEOTIDE SEQUENCE [LARGE SCALE GENOMIC DNA]</scope>
    <source>
        <strain>DSM 2379 / NBRC 103807 / OttBd1</strain>
    </source>
</reference>
<gene>
    <name evidence="1" type="primary">rpoC</name>
    <name type="ordered locus">Ppro_0674</name>
</gene>
<sequence length="1409" mass="156570">MEDYFSFFDKPKDPLHFSAIRISVSSPEKIRERSHGEVKKPETINYRTFKPERDGLFCAKIFGPTKDYECNCGKYKRMKHRGIICEKCGVEVIPSKVRRERLGHIDLATPVAHIWFLKSLPSRIGNLLDITLKDLEKVLYFEAFVISDPKNSPLQFCEVMSEDKFLKAQQEYGYDAFSGGMGAEAIRECLKAIDLDELSGQLRTEMMESTSEAKRKKTAKRLKVLEAFKSSGNKPEWMILECIPVLPPELRPLVPLDGGRFATSDLNDLYRRVINRNNRLKRLVELQAPEVIIRNEKRMLQEAVDALFDNGRRGRAIAGPNKRPLKSLSDMLKGKSGRFRQNLLGKRVDYSGRSVIVVGPELKLHQCGLPKKMALELFKPFIYNKLEERGYVTTIKSAKKMVEKERPEVWDVLEEVIREHPVMLNRAPTLHRLGIQAFEPVLIEGKAIQLHPLVCTAFNADFDGDQMAVHLPLSVESQVEARVLMMSTNNILSPAHGKPIIVPSQDMVLGAYYMTRDRRFERVIDETTGKEKIDAESGLPIYRKVKGTGKVFSGPDEVRIAFDAGEVDMQATVKVRMKNLVSDEKPQMIDTTVGRVILKEILPDSVPFSAVNKVMNKKELSNLVDTCYRMADNKETVILADKLKDIGFRYANLAGISICLDDMVIPEGKTEILTKAEDEVKEIQNQYTEGLITDGERYNKVIDIWAKATEDIAKEMLDNLSKEKFFVEGVGVSEEASFNAIHMMADSGARGSHQQIRQLAGMRGLMAKPSGEIIETPITANFREGLTVLQYFISTHGARKGLADTALKTANSGYLTRRLVDVAQDAIIAEEDCGTLDGLVVSSLTEGGEVIEHIGDRILGRVALDDILDPITGDVLVAANEDIDENLVKRIEDAGLEKVKIRSVLTCQSRRGICSKCYGRDLARGHSVNMGEAVGVIAAQSIGEPGTQLTMRTFHIGGTASRRAEQTSLESRTDGILKFINLNTVINAEGHHIVMNRNGEIAVVDETGREREKYLVLYGAKIKIAPGGAVTQGGILAEWDPYTMPILTEFSGKVKFGDIVEGVTMEEQLDEVTGLSRKVIIESKDSDKRPRIAIKGMGGDSADAVTGTIGRYFLPVGANITVQDDSVISAGDIIAKIPRETTKTKDITGGLPRVAELFEARKPKDFAVISEIDGRVSYGKDAKGKRKVIVTPEMGEPKEYLIPKGKHISVHEGDHVRAGEPLMDGSSNPHDILRVLGVKELAKYLVDEVQEVYRLQGVKINDKHIEVIVRQMLRRVRIKDVGDTSLLVDDQVERWVFETENQKVMNEGKRPAIAEPLLLGITKASLSTESFISAASFQETTKVLTQAAIEGKVDYLRGLKENVIMGRLIPAGTGLSSYRNIRMLTEASEPVAQAAESEDVPDVSQQEAA</sequence>
<comment type="function">
    <text evidence="1">DNA-dependent RNA polymerase catalyzes the transcription of DNA into RNA using the four ribonucleoside triphosphates as substrates.</text>
</comment>
<comment type="catalytic activity">
    <reaction evidence="1">
        <text>RNA(n) + a ribonucleoside 5'-triphosphate = RNA(n+1) + diphosphate</text>
        <dbReference type="Rhea" id="RHEA:21248"/>
        <dbReference type="Rhea" id="RHEA-COMP:14527"/>
        <dbReference type="Rhea" id="RHEA-COMP:17342"/>
        <dbReference type="ChEBI" id="CHEBI:33019"/>
        <dbReference type="ChEBI" id="CHEBI:61557"/>
        <dbReference type="ChEBI" id="CHEBI:140395"/>
        <dbReference type="EC" id="2.7.7.6"/>
    </reaction>
</comment>
<comment type="cofactor">
    <cofactor evidence="1">
        <name>Mg(2+)</name>
        <dbReference type="ChEBI" id="CHEBI:18420"/>
    </cofactor>
    <text evidence="1">Binds 1 Mg(2+) ion per subunit.</text>
</comment>
<comment type="cofactor">
    <cofactor evidence="1">
        <name>Zn(2+)</name>
        <dbReference type="ChEBI" id="CHEBI:29105"/>
    </cofactor>
    <text evidence="1">Binds 2 Zn(2+) ions per subunit.</text>
</comment>
<comment type="subunit">
    <text evidence="1">The RNAP catalytic core consists of 2 alpha, 1 beta, 1 beta' and 1 omega subunit. When a sigma factor is associated with the core the holoenzyme is formed, which can initiate transcription.</text>
</comment>
<comment type="similarity">
    <text evidence="1">Belongs to the RNA polymerase beta' chain family.</text>
</comment>
<accession>A1ALT5</accession>
<evidence type="ECO:0000255" key="1">
    <source>
        <dbReference type="HAMAP-Rule" id="MF_01322"/>
    </source>
</evidence>
<evidence type="ECO:0000256" key="2">
    <source>
        <dbReference type="SAM" id="MobiDB-lite"/>
    </source>
</evidence>
<name>RPOC_PELPD</name>
<keyword id="KW-0240">DNA-directed RNA polymerase</keyword>
<keyword id="KW-0460">Magnesium</keyword>
<keyword id="KW-0479">Metal-binding</keyword>
<keyword id="KW-0548">Nucleotidyltransferase</keyword>
<keyword id="KW-1185">Reference proteome</keyword>
<keyword id="KW-0804">Transcription</keyword>
<keyword id="KW-0808">Transferase</keyword>
<keyword id="KW-0862">Zinc</keyword>
<dbReference type="EC" id="2.7.7.6" evidence="1"/>
<dbReference type="EMBL" id="CP000482">
    <property type="protein sequence ID" value="ABK98305.1"/>
    <property type="molecule type" value="Genomic_DNA"/>
</dbReference>
<dbReference type="RefSeq" id="WP_011734618.1">
    <property type="nucleotide sequence ID" value="NC_008609.1"/>
</dbReference>
<dbReference type="SMR" id="A1ALT5"/>
<dbReference type="STRING" id="338966.Ppro_0674"/>
<dbReference type="KEGG" id="ppd:Ppro_0674"/>
<dbReference type="eggNOG" id="COG0086">
    <property type="taxonomic scope" value="Bacteria"/>
</dbReference>
<dbReference type="HOGENOM" id="CLU_000524_3_1_7"/>
<dbReference type="OrthoDB" id="9815296at2"/>
<dbReference type="Proteomes" id="UP000006732">
    <property type="component" value="Chromosome"/>
</dbReference>
<dbReference type="GO" id="GO:0000428">
    <property type="term" value="C:DNA-directed RNA polymerase complex"/>
    <property type="evidence" value="ECO:0007669"/>
    <property type="project" value="UniProtKB-KW"/>
</dbReference>
<dbReference type="GO" id="GO:0003677">
    <property type="term" value="F:DNA binding"/>
    <property type="evidence" value="ECO:0007669"/>
    <property type="project" value="UniProtKB-UniRule"/>
</dbReference>
<dbReference type="GO" id="GO:0003899">
    <property type="term" value="F:DNA-directed RNA polymerase activity"/>
    <property type="evidence" value="ECO:0007669"/>
    <property type="project" value="UniProtKB-UniRule"/>
</dbReference>
<dbReference type="GO" id="GO:0000287">
    <property type="term" value="F:magnesium ion binding"/>
    <property type="evidence" value="ECO:0007669"/>
    <property type="project" value="UniProtKB-UniRule"/>
</dbReference>
<dbReference type="GO" id="GO:0008270">
    <property type="term" value="F:zinc ion binding"/>
    <property type="evidence" value="ECO:0007669"/>
    <property type="project" value="UniProtKB-UniRule"/>
</dbReference>
<dbReference type="GO" id="GO:0006351">
    <property type="term" value="P:DNA-templated transcription"/>
    <property type="evidence" value="ECO:0007669"/>
    <property type="project" value="UniProtKB-UniRule"/>
</dbReference>
<dbReference type="CDD" id="cd02655">
    <property type="entry name" value="RNAP_beta'_C"/>
    <property type="match status" value="1"/>
</dbReference>
<dbReference type="CDD" id="cd01609">
    <property type="entry name" value="RNAP_beta'_N"/>
    <property type="match status" value="1"/>
</dbReference>
<dbReference type="FunFam" id="1.10.132.30:FF:000003">
    <property type="entry name" value="DNA-directed RNA polymerase subunit beta"/>
    <property type="match status" value="1"/>
</dbReference>
<dbReference type="FunFam" id="1.10.150.390:FF:000002">
    <property type="entry name" value="DNA-directed RNA polymerase subunit beta"/>
    <property type="match status" value="1"/>
</dbReference>
<dbReference type="FunFam" id="1.10.40.90:FF:000001">
    <property type="entry name" value="DNA-directed RNA polymerase subunit beta"/>
    <property type="match status" value="1"/>
</dbReference>
<dbReference type="Gene3D" id="1.10.132.30">
    <property type="match status" value="1"/>
</dbReference>
<dbReference type="Gene3D" id="1.10.150.390">
    <property type="match status" value="1"/>
</dbReference>
<dbReference type="Gene3D" id="1.10.1790.20">
    <property type="match status" value="1"/>
</dbReference>
<dbReference type="Gene3D" id="1.10.40.90">
    <property type="match status" value="1"/>
</dbReference>
<dbReference type="Gene3D" id="2.40.40.20">
    <property type="match status" value="1"/>
</dbReference>
<dbReference type="Gene3D" id="2.40.50.100">
    <property type="match status" value="3"/>
</dbReference>
<dbReference type="Gene3D" id="4.10.860.120">
    <property type="entry name" value="RNA polymerase II, clamp domain"/>
    <property type="match status" value="1"/>
</dbReference>
<dbReference type="Gene3D" id="1.10.274.100">
    <property type="entry name" value="RNA polymerase Rpb1, domain 3"/>
    <property type="match status" value="1"/>
</dbReference>
<dbReference type="HAMAP" id="MF_01322">
    <property type="entry name" value="RNApol_bact_RpoC"/>
    <property type="match status" value="1"/>
</dbReference>
<dbReference type="InterPro" id="IPR045867">
    <property type="entry name" value="DNA-dir_RpoC_beta_prime"/>
</dbReference>
<dbReference type="InterPro" id="IPR012754">
    <property type="entry name" value="DNA-dir_RpoC_beta_prime_bact"/>
</dbReference>
<dbReference type="InterPro" id="IPR000722">
    <property type="entry name" value="RNA_pol_asu"/>
</dbReference>
<dbReference type="InterPro" id="IPR006592">
    <property type="entry name" value="RNA_pol_N"/>
</dbReference>
<dbReference type="InterPro" id="IPR007080">
    <property type="entry name" value="RNA_pol_Rpb1_1"/>
</dbReference>
<dbReference type="InterPro" id="IPR007066">
    <property type="entry name" value="RNA_pol_Rpb1_3"/>
</dbReference>
<dbReference type="InterPro" id="IPR042102">
    <property type="entry name" value="RNA_pol_Rpb1_3_sf"/>
</dbReference>
<dbReference type="InterPro" id="IPR007083">
    <property type="entry name" value="RNA_pol_Rpb1_4"/>
</dbReference>
<dbReference type="InterPro" id="IPR007081">
    <property type="entry name" value="RNA_pol_Rpb1_5"/>
</dbReference>
<dbReference type="InterPro" id="IPR044893">
    <property type="entry name" value="RNA_pol_Rpb1_clamp_domain"/>
</dbReference>
<dbReference type="InterPro" id="IPR038120">
    <property type="entry name" value="Rpb1_funnel_sf"/>
</dbReference>
<dbReference type="NCBIfam" id="TIGR02386">
    <property type="entry name" value="rpoC_TIGR"/>
    <property type="match status" value="1"/>
</dbReference>
<dbReference type="PANTHER" id="PTHR19376">
    <property type="entry name" value="DNA-DIRECTED RNA POLYMERASE"/>
    <property type="match status" value="1"/>
</dbReference>
<dbReference type="PANTHER" id="PTHR19376:SF54">
    <property type="entry name" value="DNA-DIRECTED RNA POLYMERASE SUBUNIT BETA"/>
    <property type="match status" value="1"/>
</dbReference>
<dbReference type="Pfam" id="PF04997">
    <property type="entry name" value="RNA_pol_Rpb1_1"/>
    <property type="match status" value="1"/>
</dbReference>
<dbReference type="Pfam" id="PF00623">
    <property type="entry name" value="RNA_pol_Rpb1_2"/>
    <property type="match status" value="2"/>
</dbReference>
<dbReference type="Pfam" id="PF04983">
    <property type="entry name" value="RNA_pol_Rpb1_3"/>
    <property type="match status" value="1"/>
</dbReference>
<dbReference type="Pfam" id="PF05000">
    <property type="entry name" value="RNA_pol_Rpb1_4"/>
    <property type="match status" value="1"/>
</dbReference>
<dbReference type="Pfam" id="PF04998">
    <property type="entry name" value="RNA_pol_Rpb1_5"/>
    <property type="match status" value="1"/>
</dbReference>
<dbReference type="SMART" id="SM00663">
    <property type="entry name" value="RPOLA_N"/>
    <property type="match status" value="1"/>
</dbReference>
<dbReference type="SUPFAM" id="SSF64484">
    <property type="entry name" value="beta and beta-prime subunits of DNA dependent RNA-polymerase"/>
    <property type="match status" value="1"/>
</dbReference>
<proteinExistence type="inferred from homology"/>
<organism>
    <name type="scientific">Pelobacter propionicus (strain DSM 2379 / NBRC 103807 / OttBd1)</name>
    <dbReference type="NCBI Taxonomy" id="338966"/>
    <lineage>
        <taxon>Bacteria</taxon>
        <taxon>Pseudomonadati</taxon>
        <taxon>Thermodesulfobacteriota</taxon>
        <taxon>Desulfuromonadia</taxon>
        <taxon>Desulfuromonadales</taxon>
        <taxon>Desulfuromonadaceae</taxon>
        <taxon>Pelobacter</taxon>
    </lineage>
</organism>